<dbReference type="EMBL" id="AB008268">
    <property type="protein sequence ID" value="BAB09872.1"/>
    <property type="molecule type" value="Genomic_DNA"/>
</dbReference>
<dbReference type="EMBL" id="CP002688">
    <property type="protein sequence ID" value="AED97890.1"/>
    <property type="molecule type" value="Genomic_DNA"/>
</dbReference>
<dbReference type="EMBL" id="AY099843">
    <property type="protein sequence ID" value="AAM20694.1"/>
    <property type="molecule type" value="mRNA"/>
</dbReference>
<dbReference type="EMBL" id="BT000339">
    <property type="protein sequence ID" value="AAN15658.1"/>
    <property type="molecule type" value="mRNA"/>
</dbReference>
<dbReference type="EMBL" id="AY087053">
    <property type="protein sequence ID" value="AAM64614.1"/>
    <property type="molecule type" value="mRNA"/>
</dbReference>
<dbReference type="RefSeq" id="NP_201246.1">
    <property type="nucleotide sequence ID" value="NM_125837.4"/>
</dbReference>
<dbReference type="BioGRID" id="21804">
    <property type="interactions" value="4"/>
</dbReference>
<dbReference type="FunCoup" id="Q9FME8">
    <property type="interactions" value="207"/>
</dbReference>
<dbReference type="STRING" id="3702.Q9FME8"/>
<dbReference type="iPTMnet" id="Q9FME8"/>
<dbReference type="PaxDb" id="3702-AT5G64410.1"/>
<dbReference type="ProteomicsDB" id="248818"/>
<dbReference type="EnsemblPlants" id="AT5G64410.1">
    <property type="protein sequence ID" value="AT5G64410.1"/>
    <property type="gene ID" value="AT5G64410"/>
</dbReference>
<dbReference type="GeneID" id="836562"/>
<dbReference type="Gramene" id="AT5G64410.1">
    <property type="protein sequence ID" value="AT5G64410.1"/>
    <property type="gene ID" value="AT5G64410"/>
</dbReference>
<dbReference type="KEGG" id="ath:AT5G64410"/>
<dbReference type="Araport" id="AT5G64410"/>
<dbReference type="TAIR" id="AT5G64410">
    <property type="gene designation" value="OPT4"/>
</dbReference>
<dbReference type="eggNOG" id="KOG2262">
    <property type="taxonomic scope" value="Eukaryota"/>
</dbReference>
<dbReference type="HOGENOM" id="CLU_004965_1_1_1"/>
<dbReference type="InParanoid" id="Q9FME8"/>
<dbReference type="OMA" id="RWIVYPA"/>
<dbReference type="PhylomeDB" id="Q9FME8"/>
<dbReference type="PRO" id="PR:Q9FME8"/>
<dbReference type="Proteomes" id="UP000006548">
    <property type="component" value="Chromosome 5"/>
</dbReference>
<dbReference type="ExpressionAtlas" id="Q9FME8">
    <property type="expression patterns" value="baseline and differential"/>
</dbReference>
<dbReference type="GO" id="GO:0016020">
    <property type="term" value="C:membrane"/>
    <property type="evidence" value="ECO:0000250"/>
    <property type="project" value="TAIR"/>
</dbReference>
<dbReference type="GO" id="GO:0035673">
    <property type="term" value="F:oligopeptide transmembrane transporter activity"/>
    <property type="evidence" value="ECO:0007669"/>
    <property type="project" value="InterPro"/>
</dbReference>
<dbReference type="GO" id="GO:0015031">
    <property type="term" value="P:protein transport"/>
    <property type="evidence" value="ECO:0007669"/>
    <property type="project" value="UniProtKB-KW"/>
</dbReference>
<dbReference type="InterPro" id="IPR004648">
    <property type="entry name" value="Oligpept_transpt"/>
</dbReference>
<dbReference type="InterPro" id="IPR004813">
    <property type="entry name" value="OPT"/>
</dbReference>
<dbReference type="NCBIfam" id="TIGR00727">
    <property type="entry name" value="ISP4_OPT"/>
    <property type="match status" value="1"/>
</dbReference>
<dbReference type="NCBIfam" id="TIGR00728">
    <property type="entry name" value="OPT_sfam"/>
    <property type="match status" value="1"/>
</dbReference>
<dbReference type="PANTHER" id="PTHR22601">
    <property type="entry name" value="ISP4 LIKE PROTEIN"/>
    <property type="match status" value="1"/>
</dbReference>
<dbReference type="Pfam" id="PF03169">
    <property type="entry name" value="OPT"/>
    <property type="match status" value="1"/>
</dbReference>
<reference key="1">
    <citation type="journal article" date="1997" name="DNA Res.">
        <title>Structural analysis of Arabidopsis thaliana chromosome 5. III. Sequence features of the regions of 1,191,918 bp covered by seventeen physically assigned P1 clones.</title>
        <authorList>
            <person name="Nakamura Y."/>
            <person name="Sato S."/>
            <person name="Kaneko T."/>
            <person name="Kotani H."/>
            <person name="Asamizu E."/>
            <person name="Miyajima N."/>
            <person name="Tabata S."/>
        </authorList>
    </citation>
    <scope>NUCLEOTIDE SEQUENCE [LARGE SCALE GENOMIC DNA]</scope>
    <source>
        <strain>cv. Columbia</strain>
    </source>
</reference>
<reference key="2">
    <citation type="journal article" date="2017" name="Plant J.">
        <title>Araport11: a complete reannotation of the Arabidopsis thaliana reference genome.</title>
        <authorList>
            <person name="Cheng C.Y."/>
            <person name="Krishnakumar V."/>
            <person name="Chan A.P."/>
            <person name="Thibaud-Nissen F."/>
            <person name="Schobel S."/>
            <person name="Town C.D."/>
        </authorList>
    </citation>
    <scope>GENOME REANNOTATION</scope>
    <source>
        <strain>cv. Columbia</strain>
    </source>
</reference>
<reference key="3">
    <citation type="journal article" date="2003" name="Science">
        <title>Empirical analysis of transcriptional activity in the Arabidopsis genome.</title>
        <authorList>
            <person name="Yamada K."/>
            <person name="Lim J."/>
            <person name="Dale J.M."/>
            <person name="Chen H."/>
            <person name="Shinn P."/>
            <person name="Palm C.J."/>
            <person name="Southwick A.M."/>
            <person name="Wu H.C."/>
            <person name="Kim C.J."/>
            <person name="Nguyen M."/>
            <person name="Pham P.K."/>
            <person name="Cheuk R.F."/>
            <person name="Karlin-Newmann G."/>
            <person name="Liu S.X."/>
            <person name="Lam B."/>
            <person name="Sakano H."/>
            <person name="Wu T."/>
            <person name="Yu G."/>
            <person name="Miranda M."/>
            <person name="Quach H.L."/>
            <person name="Tripp M."/>
            <person name="Chang C.H."/>
            <person name="Lee J.M."/>
            <person name="Toriumi M.J."/>
            <person name="Chan M.M."/>
            <person name="Tang C.C."/>
            <person name="Onodera C.S."/>
            <person name="Deng J.M."/>
            <person name="Akiyama K."/>
            <person name="Ansari Y."/>
            <person name="Arakawa T."/>
            <person name="Banh J."/>
            <person name="Banno F."/>
            <person name="Bowser L."/>
            <person name="Brooks S.Y."/>
            <person name="Carninci P."/>
            <person name="Chao Q."/>
            <person name="Choy N."/>
            <person name="Enju A."/>
            <person name="Goldsmith A.D."/>
            <person name="Gurjal M."/>
            <person name="Hansen N.F."/>
            <person name="Hayashizaki Y."/>
            <person name="Johnson-Hopson C."/>
            <person name="Hsuan V.W."/>
            <person name="Iida K."/>
            <person name="Karnes M."/>
            <person name="Khan S."/>
            <person name="Koesema E."/>
            <person name="Ishida J."/>
            <person name="Jiang P.X."/>
            <person name="Jones T."/>
            <person name="Kawai J."/>
            <person name="Kamiya A."/>
            <person name="Meyers C."/>
            <person name="Nakajima M."/>
            <person name="Narusaka M."/>
            <person name="Seki M."/>
            <person name="Sakurai T."/>
            <person name="Satou M."/>
            <person name="Tamse R."/>
            <person name="Vaysberg M."/>
            <person name="Wallender E.K."/>
            <person name="Wong C."/>
            <person name="Yamamura Y."/>
            <person name="Yuan S."/>
            <person name="Shinozaki K."/>
            <person name="Davis R.W."/>
            <person name="Theologis A."/>
            <person name="Ecker J.R."/>
        </authorList>
    </citation>
    <scope>NUCLEOTIDE SEQUENCE [LARGE SCALE MRNA]</scope>
    <source>
        <strain>cv. Columbia</strain>
    </source>
</reference>
<reference key="4">
    <citation type="submission" date="2002-03" db="EMBL/GenBank/DDBJ databases">
        <title>Full-length cDNA from Arabidopsis thaliana.</title>
        <authorList>
            <person name="Brover V.V."/>
            <person name="Troukhan M.E."/>
            <person name="Alexandrov N.A."/>
            <person name="Lu Y.-P."/>
            <person name="Flavell R.B."/>
            <person name="Feldmann K.A."/>
        </authorList>
    </citation>
    <scope>NUCLEOTIDE SEQUENCE [LARGE SCALE MRNA]</scope>
</reference>
<reference key="5">
    <citation type="journal article" date="2002" name="Plant Physiol.">
        <title>An oligopeptide transporter gene family in Arabidopsis.</title>
        <authorList>
            <person name="Koh S."/>
            <person name="Wiles A.M."/>
            <person name="Sharp J.S."/>
            <person name="Naider F.R."/>
            <person name="Becker J.M."/>
            <person name="Stacey G."/>
        </authorList>
    </citation>
    <scope>FUNCTION</scope>
    <scope>NOMENCLATURE</scope>
    <scope>TISSUE SPECIFICITY</scope>
</reference>
<reference key="6">
    <citation type="journal article" date="2007" name="Biochem. Biophys. Res. Commun.">
        <title>Novel subsets of the Arabidopsis plasmalemma phosphoproteome identify phosphorylation sites in secondary active transporters.</title>
        <authorList>
            <person name="Hem S."/>
            <person name="Rofidal V."/>
            <person name="Sommerer N."/>
            <person name="Rossignol M."/>
        </authorList>
    </citation>
    <scope>ACETYLATION [LARGE SCALE ANALYSIS] AT ALA-2</scope>
    <scope>PHOSPHORYLATION [LARGE SCALE ANALYSIS] AT SER-8</scope>
    <scope>CLEAVAGE OF INITIATOR METHIONINE [LARGE SCALE ANALYSIS]</scope>
    <scope>IDENTIFICATION BY MASS SPECTROMETRY [LARGE SCALE ANALYSIS]</scope>
</reference>
<gene>
    <name type="primary">OPT4</name>
    <name type="ordered locus">At5g64410</name>
    <name type="ORF">MSJ1.25</name>
</gene>
<feature type="initiator methionine" description="Removed" evidence="4">
    <location>
        <position position="1"/>
    </location>
</feature>
<feature type="chain" id="PRO_0000213781" description="Oligopeptide transporter 4">
    <location>
        <begin position="2"/>
        <end position="729"/>
    </location>
</feature>
<feature type="transmembrane region" description="Helical" evidence="1">
    <location>
        <begin position="37"/>
        <end position="57"/>
    </location>
</feature>
<feature type="transmembrane region" description="Helical" evidence="1">
    <location>
        <begin position="61"/>
        <end position="81"/>
    </location>
</feature>
<feature type="transmembrane region" description="Helical" evidence="1">
    <location>
        <begin position="123"/>
        <end position="143"/>
    </location>
</feature>
<feature type="transmembrane region" description="Helical" evidence="1">
    <location>
        <begin position="148"/>
        <end position="168"/>
    </location>
</feature>
<feature type="transmembrane region" description="Helical" evidence="1">
    <location>
        <begin position="177"/>
        <end position="194"/>
    </location>
</feature>
<feature type="transmembrane region" description="Helical" evidence="1">
    <location>
        <begin position="207"/>
        <end position="227"/>
    </location>
</feature>
<feature type="transmembrane region" description="Helical" evidence="1">
    <location>
        <begin position="256"/>
        <end position="276"/>
    </location>
</feature>
<feature type="transmembrane region" description="Helical" evidence="1">
    <location>
        <begin position="279"/>
        <end position="299"/>
    </location>
</feature>
<feature type="transmembrane region" description="Helical" evidence="1">
    <location>
        <begin position="352"/>
        <end position="372"/>
    </location>
</feature>
<feature type="transmembrane region" description="Helical" evidence="1">
    <location>
        <begin position="410"/>
        <end position="430"/>
    </location>
</feature>
<feature type="transmembrane region" description="Helical" evidence="1">
    <location>
        <begin position="438"/>
        <end position="458"/>
    </location>
</feature>
<feature type="transmembrane region" description="Helical" evidence="1">
    <location>
        <begin position="522"/>
        <end position="542"/>
    </location>
</feature>
<feature type="transmembrane region" description="Helical" evidence="1">
    <location>
        <begin position="592"/>
        <end position="612"/>
    </location>
</feature>
<feature type="transmembrane region" description="Helical" evidence="1">
    <location>
        <begin position="621"/>
        <end position="637"/>
    </location>
</feature>
<feature type="transmembrane region" description="Helical" evidence="1">
    <location>
        <begin position="640"/>
        <end position="660"/>
    </location>
</feature>
<feature type="transmembrane region" description="Helical" evidence="1">
    <location>
        <begin position="673"/>
        <end position="693"/>
    </location>
</feature>
<feature type="modified residue" description="N-acetylalanine" evidence="4">
    <location>
        <position position="2"/>
    </location>
</feature>
<feature type="modified residue" description="Phosphoserine" evidence="4">
    <location>
        <position position="8"/>
    </location>
</feature>
<feature type="sequence conflict" description="In Ref. 4; AAM64614." evidence="3" ref="4">
    <original>F</original>
    <variation>L</variation>
    <location>
        <position position="295"/>
    </location>
</feature>
<feature type="sequence conflict" description="In Ref. 4; AAM64614." evidence="3" ref="4">
    <original>N</original>
    <variation>K</variation>
    <location>
        <position position="325"/>
    </location>
</feature>
<name>OPT4_ARATH</name>
<comment type="function">
    <text evidence="2">Involved in the translocation of tetra- and pentapeptides across the cellular membrane in an energy-dependent manner.</text>
</comment>
<comment type="subcellular location">
    <subcellularLocation>
        <location evidence="3">Membrane</location>
        <topology evidence="3">Multi-pass membrane protein</topology>
    </subcellularLocation>
</comment>
<comment type="tissue specificity">
    <text evidence="2">Expressed in flowers, leaves, roots, and stems.</text>
</comment>
<comment type="similarity">
    <text evidence="3">Belongs to the oligopeptide OPT transporter (TC 2.A.67.1) family.</text>
</comment>
<proteinExistence type="evidence at protein level"/>
<protein>
    <recommendedName>
        <fullName>Oligopeptide transporter 4</fullName>
        <shortName>AtOPT4</shortName>
    </recommendedName>
</protein>
<organism>
    <name type="scientific">Arabidopsis thaliana</name>
    <name type="common">Mouse-ear cress</name>
    <dbReference type="NCBI Taxonomy" id="3702"/>
    <lineage>
        <taxon>Eukaryota</taxon>
        <taxon>Viridiplantae</taxon>
        <taxon>Streptophyta</taxon>
        <taxon>Embryophyta</taxon>
        <taxon>Tracheophyta</taxon>
        <taxon>Spermatophyta</taxon>
        <taxon>Magnoliopsida</taxon>
        <taxon>eudicotyledons</taxon>
        <taxon>Gunneridae</taxon>
        <taxon>Pentapetalae</taxon>
        <taxon>rosids</taxon>
        <taxon>malvids</taxon>
        <taxon>Brassicales</taxon>
        <taxon>Brassicaceae</taxon>
        <taxon>Camelineae</taxon>
        <taxon>Arabidopsis</taxon>
    </lineage>
</organism>
<evidence type="ECO:0000255" key="1"/>
<evidence type="ECO:0000269" key="2">
    <source>
    </source>
</evidence>
<evidence type="ECO:0000305" key="3"/>
<evidence type="ECO:0007744" key="4">
    <source>
    </source>
</evidence>
<sequence length="729" mass="81793">MATADEFSDEDTSPIEEVRLTVTNTDDPTLPVWTFRMWFLGLISCSLLSFLNQFFSYRTEPLVITQITVQVATLPIGHFLAKVLPKTRFGLPGCGSARFSLNPGPFNMKEHVLISIFANAGSAFGSGSAYAVGIITIIKAFYGRSISFIAGWLLIITTQVLGYGWAGLLRKYVVEPAHMWWPSTLVQVSLFRALHEKDDQRMTRAKFFVIALVCSFGWYIVPGYLFTTLTSISWVCWAFPRSVTAQQIGSGMRGLGLGAFTLDWTAVASFLFSPLISPFFAIANVFIGYVLLIYFVLPLAYWGFDSYNATRFPIFSSHLFTSVGNTYDIPAIVNDNFELDLAKYEQQGRINLSMFFALTYGLGFATIASTLTHVALFYGKEISERFRVSYKGKEDIHTRLMKRYKDIPSWWFYSMLAATLLISLALCVFLNDEVQMPWWGLVFASAMAFVFTLPISIITATTNQTPGLNIITEYAMGLIYPGRPIANVCFKVYGYMSMAQAVSFLNDFKLGHYMKIPPRSMFLVQFIGTILAGTINITVAWWQLNSIKNICQEELLPPNSPWTCPGDRVFFDASVIWGLVGPKRIFGSQGNYAAMNWFFLGGALGPVIVWSLHKAFPKRSWIPLVNLPVLLGATAMMPPATAVNYNSWILVGTIFNLFVFRYRKSWWQRYNYVLSAAMDAGVAFMAVLLYFSVGMEEKSLDWWGTRGEHCDLAKCPTARGVIVDGCPVK</sequence>
<accession>Q9FME8</accession>
<accession>Q8LBQ6</accession>
<keyword id="KW-0007">Acetylation</keyword>
<keyword id="KW-0472">Membrane</keyword>
<keyword id="KW-0571">Peptide transport</keyword>
<keyword id="KW-0597">Phosphoprotein</keyword>
<keyword id="KW-0653">Protein transport</keyword>
<keyword id="KW-1185">Reference proteome</keyword>
<keyword id="KW-0812">Transmembrane</keyword>
<keyword id="KW-1133">Transmembrane helix</keyword>
<keyword id="KW-0813">Transport</keyword>